<sequence>MQSERIYLVWAHPRHDSLTAHIADAIHQRAMERKIQVTELDLYRRNFNPVMTPEDEPDWKNMDKRYSPEVHQLYSELLEHDTLVVVFPLWWYSFPAMLKGYIDRVWNNGLAYGDGHKLPFNKVRWVALVGGDKESFVQMGWEKNISDYLKNMCSYLGIEDADVTFLCNTVVFDGEELHASYYQSLLSQVRDMVDAL</sequence>
<reference key="1">
    <citation type="journal article" date="1996" name="DNA Res.">
        <title>A 718-kb DNA sequence of the Escherichia coli K-12 genome corresponding to the 12.7-28.0 min region on the linkage map.</title>
        <authorList>
            <person name="Oshima T."/>
            <person name="Aiba H."/>
            <person name="Baba T."/>
            <person name="Fujita K."/>
            <person name="Hayashi K."/>
            <person name="Honjo A."/>
            <person name="Ikemoto K."/>
            <person name="Inada T."/>
            <person name="Itoh T."/>
            <person name="Kajihara M."/>
            <person name="Kanai K."/>
            <person name="Kashimoto K."/>
            <person name="Kimura S."/>
            <person name="Kitagawa M."/>
            <person name="Makino K."/>
            <person name="Masuda S."/>
            <person name="Miki T."/>
            <person name="Mizobuchi K."/>
            <person name="Mori H."/>
            <person name="Motomura K."/>
            <person name="Nakamura Y."/>
            <person name="Nashimoto H."/>
            <person name="Nishio Y."/>
            <person name="Saito N."/>
            <person name="Sampei G."/>
            <person name="Seki Y."/>
            <person name="Tagami H."/>
            <person name="Takemoto K."/>
            <person name="Wada C."/>
            <person name="Yamamoto Y."/>
            <person name="Yano M."/>
            <person name="Horiuchi T."/>
        </authorList>
    </citation>
    <scope>NUCLEOTIDE SEQUENCE [LARGE SCALE GENOMIC DNA]</scope>
    <source>
        <strain>K12 / W3110 / ATCC 27325 / DSM 5911</strain>
    </source>
</reference>
<reference key="2">
    <citation type="journal article" date="1997" name="Science">
        <title>The complete genome sequence of Escherichia coli K-12.</title>
        <authorList>
            <person name="Blattner F.R."/>
            <person name="Plunkett G. III"/>
            <person name="Bloch C.A."/>
            <person name="Perna N.T."/>
            <person name="Burland V."/>
            <person name="Riley M."/>
            <person name="Collado-Vides J."/>
            <person name="Glasner J.D."/>
            <person name="Rode C.K."/>
            <person name="Mayhew G.F."/>
            <person name="Gregor J."/>
            <person name="Davis N.W."/>
            <person name="Kirkpatrick H.A."/>
            <person name="Goeden M.A."/>
            <person name="Rose D.J."/>
            <person name="Mau B."/>
            <person name="Shao Y."/>
        </authorList>
    </citation>
    <scope>NUCLEOTIDE SEQUENCE [LARGE SCALE GENOMIC DNA]</scope>
    <source>
        <strain>K12 / MG1655 / ATCC 47076</strain>
    </source>
</reference>
<reference key="3">
    <citation type="journal article" date="2006" name="Mol. Syst. Biol.">
        <title>Highly accurate genome sequences of Escherichia coli K-12 strains MG1655 and W3110.</title>
        <authorList>
            <person name="Hayashi K."/>
            <person name="Morooka N."/>
            <person name="Yamamoto Y."/>
            <person name="Fujita K."/>
            <person name="Isono K."/>
            <person name="Choi S."/>
            <person name="Ohtsubo E."/>
            <person name="Baba T."/>
            <person name="Wanner B.L."/>
            <person name="Mori H."/>
            <person name="Horiuchi T."/>
        </authorList>
    </citation>
    <scope>NUCLEOTIDE SEQUENCE [LARGE SCALE GENOMIC DNA]</scope>
    <source>
        <strain>K12 / W3110 / ATCC 27325 / DSM 5911</strain>
    </source>
</reference>
<reference key="4">
    <citation type="journal article" date="1988" name="Eur. J. Biochem.">
        <title>Primary structures of Escherichia coli pyruvate formate-lyase and pyruvate-formate-lyase-activating enzyme deduced from the DNA nucleotide sequences.</title>
        <authorList>
            <person name="Roedel W."/>
            <person name="Plaga W."/>
            <person name="Frank R."/>
            <person name="Knappe J."/>
        </authorList>
    </citation>
    <scope>NUCLEOTIDE SEQUENCE [GENOMIC DNA] OF 133-196</scope>
    <source>
        <strain>K12</strain>
    </source>
</reference>
<reference key="5">
    <citation type="journal article" date="1995" name="Nucleic Acids Res.">
        <title>Detection of new genes in a bacterial genome using Markov models for three gene classes.</title>
        <authorList>
            <person name="Borodovsky M."/>
            <person name="McIninch J."/>
            <person name="Koonin E.V."/>
            <person name="Rudd K.E."/>
            <person name="Medigue C."/>
            <person name="Danchin A."/>
        </authorList>
    </citation>
    <scope>IDENTIFICATION</scope>
</reference>
<proteinExistence type="inferred from homology"/>
<dbReference type="EC" id="1.6.99.-"/>
<dbReference type="EMBL" id="U00096">
    <property type="protein sequence ID" value="AAC73987.1"/>
    <property type="molecule type" value="Genomic_DNA"/>
</dbReference>
<dbReference type="EMBL" id="AP009048">
    <property type="protein sequence ID" value="BAA35636.1"/>
    <property type="molecule type" value="Genomic_DNA"/>
</dbReference>
<dbReference type="EMBL" id="X08035">
    <property type="status" value="NOT_ANNOTATED_CDS"/>
    <property type="molecule type" value="Genomic_DNA"/>
</dbReference>
<dbReference type="PIR" id="D64829">
    <property type="entry name" value="D64829"/>
</dbReference>
<dbReference type="RefSeq" id="NP_415421.1">
    <property type="nucleotide sequence ID" value="NC_000913.3"/>
</dbReference>
<dbReference type="RefSeq" id="WP_001190363.1">
    <property type="nucleotide sequence ID" value="NZ_STEB01000006.1"/>
</dbReference>
<dbReference type="SMR" id="P43340"/>
<dbReference type="BioGRID" id="4260008">
    <property type="interactions" value="19"/>
</dbReference>
<dbReference type="FunCoup" id="P43340">
    <property type="interactions" value="194"/>
</dbReference>
<dbReference type="IntAct" id="P43340">
    <property type="interactions" value="4"/>
</dbReference>
<dbReference type="STRING" id="511145.b0901"/>
<dbReference type="jPOST" id="P43340"/>
<dbReference type="PaxDb" id="511145-b0901"/>
<dbReference type="EnsemblBacteria" id="AAC73987">
    <property type="protein sequence ID" value="AAC73987"/>
    <property type="gene ID" value="b0901"/>
</dbReference>
<dbReference type="GeneID" id="945520"/>
<dbReference type="KEGG" id="ecj:JW0884"/>
<dbReference type="KEGG" id="eco:b0901"/>
<dbReference type="KEGG" id="ecoc:C3026_05565"/>
<dbReference type="PATRIC" id="fig|511145.12.peg.932"/>
<dbReference type="EchoBASE" id="EB2564"/>
<dbReference type="eggNOG" id="COG2249">
    <property type="taxonomic scope" value="Bacteria"/>
</dbReference>
<dbReference type="HOGENOM" id="CLU_058643_1_1_6"/>
<dbReference type="InParanoid" id="P43340"/>
<dbReference type="OMA" id="YWWSMPA"/>
<dbReference type="OrthoDB" id="9798454at2"/>
<dbReference type="PhylomeDB" id="P43340"/>
<dbReference type="BioCyc" id="EcoCyc:EG12702-MONOMER"/>
<dbReference type="PRO" id="PR:P43340"/>
<dbReference type="Proteomes" id="UP000000625">
    <property type="component" value="Chromosome"/>
</dbReference>
<dbReference type="GO" id="GO:0005829">
    <property type="term" value="C:cytosol"/>
    <property type="evidence" value="ECO:0000318"/>
    <property type="project" value="GO_Central"/>
</dbReference>
<dbReference type="GO" id="GO:0010181">
    <property type="term" value="F:FMN binding"/>
    <property type="evidence" value="ECO:0000314"/>
    <property type="project" value="EcoCyc"/>
</dbReference>
<dbReference type="GO" id="GO:0003955">
    <property type="term" value="F:NAD(P)H dehydrogenase (quinone) activity"/>
    <property type="evidence" value="ECO:0000318"/>
    <property type="project" value="GO_Central"/>
</dbReference>
<dbReference type="Gene3D" id="3.40.50.360">
    <property type="match status" value="1"/>
</dbReference>
<dbReference type="InterPro" id="IPR003680">
    <property type="entry name" value="Flavodoxin_fold"/>
</dbReference>
<dbReference type="InterPro" id="IPR029039">
    <property type="entry name" value="Flavoprotein-like_sf"/>
</dbReference>
<dbReference type="InterPro" id="IPR051545">
    <property type="entry name" value="NAD(P)H_dehydrogenase_qn"/>
</dbReference>
<dbReference type="NCBIfam" id="NF007280">
    <property type="entry name" value="PRK09739.1"/>
    <property type="match status" value="1"/>
</dbReference>
<dbReference type="PANTHER" id="PTHR10204">
    <property type="entry name" value="NAD P H OXIDOREDUCTASE-RELATED"/>
    <property type="match status" value="1"/>
</dbReference>
<dbReference type="PANTHER" id="PTHR10204:SF34">
    <property type="entry name" value="NAD(P)H DEHYDROGENASE [QUINONE] 1 ISOFORM 1"/>
    <property type="match status" value="1"/>
</dbReference>
<dbReference type="Pfam" id="PF02525">
    <property type="entry name" value="Flavodoxin_2"/>
    <property type="match status" value="1"/>
</dbReference>
<dbReference type="SUPFAM" id="SSF52218">
    <property type="entry name" value="Flavoproteins"/>
    <property type="match status" value="1"/>
</dbReference>
<protein>
    <recommendedName>
        <fullName>Uncharacterized NAD(P)H oxidoreductase YcaK</fullName>
        <ecNumber>1.6.99.-</ecNumber>
    </recommendedName>
</protein>
<accession>P43340</accession>
<accession>P75837</accession>
<organism>
    <name type="scientific">Escherichia coli (strain K12)</name>
    <dbReference type="NCBI Taxonomy" id="83333"/>
    <lineage>
        <taxon>Bacteria</taxon>
        <taxon>Pseudomonadati</taxon>
        <taxon>Pseudomonadota</taxon>
        <taxon>Gammaproteobacteria</taxon>
        <taxon>Enterobacterales</taxon>
        <taxon>Enterobacteriaceae</taxon>
        <taxon>Escherichia</taxon>
    </lineage>
</organism>
<gene>
    <name type="primary">ycaK</name>
    <name type="ordered locus">b0901</name>
    <name type="ordered locus">JW0884</name>
</gene>
<feature type="chain" id="PRO_0000071630" description="Uncharacterized NAD(P)H oxidoreductase YcaK">
    <location>
        <begin position="1"/>
        <end position="196"/>
    </location>
</feature>
<evidence type="ECO:0000305" key="1"/>
<comment type="similarity">
    <text evidence="1">Belongs to the NAD(P)H dehydrogenase (quinone) family.</text>
</comment>
<keyword id="KW-0560">Oxidoreductase</keyword>
<keyword id="KW-1185">Reference proteome</keyword>
<name>YCAK_ECOLI</name>